<proteinExistence type="inferred from homology"/>
<feature type="chain" id="PRO_1000069419" description="Iron-sulfur cluster repair protein YtfE">
    <location>
        <begin position="1"/>
        <end position="221"/>
    </location>
</feature>
<organism>
    <name type="scientific">Cronobacter sakazakii (strain ATCC BAA-894)</name>
    <name type="common">Enterobacter sakazakii</name>
    <dbReference type="NCBI Taxonomy" id="290339"/>
    <lineage>
        <taxon>Bacteria</taxon>
        <taxon>Pseudomonadati</taxon>
        <taxon>Pseudomonadota</taxon>
        <taxon>Gammaproteobacteria</taxon>
        <taxon>Enterobacterales</taxon>
        <taxon>Enterobacteriaceae</taxon>
        <taxon>Cronobacter</taxon>
    </lineage>
</organism>
<name>YTFE_CROS8</name>
<dbReference type="EMBL" id="CP000783">
    <property type="protein sequence ID" value="ABU75510.1"/>
    <property type="molecule type" value="Genomic_DNA"/>
</dbReference>
<dbReference type="RefSeq" id="WP_012123699.1">
    <property type="nucleotide sequence ID" value="NC_009778.1"/>
</dbReference>
<dbReference type="SMR" id="A7MM70"/>
<dbReference type="KEGG" id="esa:ESA_00209"/>
<dbReference type="PATRIC" id="fig|290339.8.peg.184"/>
<dbReference type="HOGENOM" id="CLU_076075_2_0_6"/>
<dbReference type="Proteomes" id="UP000000260">
    <property type="component" value="Chromosome"/>
</dbReference>
<dbReference type="GO" id="GO:0005737">
    <property type="term" value="C:cytoplasm"/>
    <property type="evidence" value="ECO:0007669"/>
    <property type="project" value="UniProtKB-SubCell"/>
</dbReference>
<dbReference type="GO" id="GO:0046872">
    <property type="term" value="F:metal ion binding"/>
    <property type="evidence" value="ECO:0007669"/>
    <property type="project" value="UniProtKB-KW"/>
</dbReference>
<dbReference type="GO" id="GO:0030091">
    <property type="term" value="P:protein repair"/>
    <property type="evidence" value="ECO:0007669"/>
    <property type="project" value="UniProtKB-UniRule"/>
</dbReference>
<dbReference type="GO" id="GO:0051409">
    <property type="term" value="P:response to nitrosative stress"/>
    <property type="evidence" value="ECO:0007669"/>
    <property type="project" value="UniProtKB-UniRule"/>
</dbReference>
<dbReference type="GO" id="GO:0006979">
    <property type="term" value="P:response to oxidative stress"/>
    <property type="evidence" value="ECO:0007669"/>
    <property type="project" value="UniProtKB-UniRule"/>
</dbReference>
<dbReference type="CDD" id="cd12108">
    <property type="entry name" value="Hr-like"/>
    <property type="match status" value="1"/>
</dbReference>
<dbReference type="Gene3D" id="1.20.120.520">
    <property type="entry name" value="nmb1532 protein domain like"/>
    <property type="match status" value="1"/>
</dbReference>
<dbReference type="HAMAP" id="MF_01606">
    <property type="entry name" value="RIC_YtfE"/>
    <property type="match status" value="1"/>
</dbReference>
<dbReference type="InterPro" id="IPR023742">
    <property type="entry name" value="FeS-repair_YftE"/>
</dbReference>
<dbReference type="InterPro" id="IPR012312">
    <property type="entry name" value="Hemerythrin-like"/>
</dbReference>
<dbReference type="InterPro" id="IPR019903">
    <property type="entry name" value="RIC_family"/>
</dbReference>
<dbReference type="NCBIfam" id="TIGR03652">
    <property type="entry name" value="FeS_repair_RIC"/>
    <property type="match status" value="1"/>
</dbReference>
<dbReference type="NCBIfam" id="NF008221">
    <property type="entry name" value="PRK10992.1"/>
    <property type="match status" value="1"/>
</dbReference>
<dbReference type="PANTHER" id="PTHR36438">
    <property type="entry name" value="IRON-SULFUR CLUSTER REPAIR PROTEIN YTFE"/>
    <property type="match status" value="1"/>
</dbReference>
<dbReference type="PANTHER" id="PTHR36438:SF1">
    <property type="entry name" value="IRON-SULFUR CLUSTER REPAIR PROTEIN YTFE"/>
    <property type="match status" value="1"/>
</dbReference>
<dbReference type="Pfam" id="PF01814">
    <property type="entry name" value="Hemerythrin"/>
    <property type="match status" value="1"/>
</dbReference>
<dbReference type="Pfam" id="PF04405">
    <property type="entry name" value="ScdA_N"/>
    <property type="match status" value="1"/>
</dbReference>
<sequence length="221" mass="24762">MAFRDQPLGELALTIPRASALFRKYNLDFCCGGKQTLLRAATRQALDLDVIESELAALAETPLEKDWQAAPLAEIIEHILVRYHDRHREQLPELILQATKVERVHADKPGVPKGLAKYLSLLHEELTSHMMKEERVLFPMIKQGMGSQAAGPVSVMESEHDEAGELLEVIKHTTNNVTPPPEACTTWRALYNGINELIDDLMNHISLENNTLFPRALAGEK</sequence>
<keyword id="KW-0963">Cytoplasm</keyword>
<keyword id="KW-0408">Iron</keyword>
<keyword id="KW-0479">Metal-binding</keyword>
<keyword id="KW-1185">Reference proteome</keyword>
<keyword id="KW-0346">Stress response</keyword>
<protein>
    <recommendedName>
        <fullName evidence="1">Iron-sulfur cluster repair protein YtfE</fullName>
    </recommendedName>
</protein>
<accession>A7MM70</accession>
<reference key="1">
    <citation type="journal article" date="2010" name="PLoS ONE">
        <title>Genome sequence of Cronobacter sakazakii BAA-894 and comparative genomic hybridization analysis with other Cronobacter species.</title>
        <authorList>
            <person name="Kucerova E."/>
            <person name="Clifton S.W."/>
            <person name="Xia X.Q."/>
            <person name="Long F."/>
            <person name="Porwollik S."/>
            <person name="Fulton L."/>
            <person name="Fronick C."/>
            <person name="Minx P."/>
            <person name="Kyung K."/>
            <person name="Warren W."/>
            <person name="Fulton R."/>
            <person name="Feng D."/>
            <person name="Wollam A."/>
            <person name="Shah N."/>
            <person name="Bhonagiri V."/>
            <person name="Nash W.E."/>
            <person name="Hallsworth-Pepin K."/>
            <person name="Wilson R.K."/>
            <person name="McClelland M."/>
            <person name="Forsythe S.J."/>
        </authorList>
    </citation>
    <scope>NUCLEOTIDE SEQUENCE [LARGE SCALE GENOMIC DNA]</scope>
    <source>
        <strain>ATCC BAA-894</strain>
    </source>
</reference>
<comment type="function">
    <text evidence="1">Di-iron-containing protein involved in the repair of iron-sulfur clusters damaged by oxidative and nitrosative stress conditions.</text>
</comment>
<comment type="subunit">
    <text evidence="1">Homodimer.</text>
</comment>
<comment type="subcellular location">
    <subcellularLocation>
        <location evidence="1">Cytoplasm</location>
    </subcellularLocation>
</comment>
<comment type="similarity">
    <text evidence="1">Belongs to the RIC family. YtfE subfamily.</text>
</comment>
<evidence type="ECO:0000255" key="1">
    <source>
        <dbReference type="HAMAP-Rule" id="MF_01606"/>
    </source>
</evidence>
<gene>
    <name evidence="1" type="primary">ytfE</name>
    <name type="ordered locus">ESA_00209</name>
</gene>